<proteinExistence type="inferred from homology"/>
<reference key="1">
    <citation type="journal article" date="2004" name="Nat. Biotechnol.">
        <title>Complete sequence and comparative genome analysis of the dairy bacterium Streptococcus thermophilus.</title>
        <authorList>
            <person name="Bolotin A."/>
            <person name="Quinquis B."/>
            <person name="Renault P."/>
            <person name="Sorokin A."/>
            <person name="Ehrlich S.D."/>
            <person name="Kulakauskas S."/>
            <person name="Lapidus A."/>
            <person name="Goltsman E."/>
            <person name="Mazur M."/>
            <person name="Pusch G.D."/>
            <person name="Fonstein M."/>
            <person name="Overbeek R."/>
            <person name="Kyprides N."/>
            <person name="Purnelle B."/>
            <person name="Prozzi D."/>
            <person name="Ngui K."/>
            <person name="Masuy D."/>
            <person name="Hancy F."/>
            <person name="Burteau S."/>
            <person name="Boutry M."/>
            <person name="Delcour J."/>
            <person name="Goffeau A."/>
            <person name="Hols P."/>
        </authorList>
    </citation>
    <scope>NUCLEOTIDE SEQUENCE [LARGE SCALE GENOMIC DNA]</scope>
    <source>
        <strain>ATCC BAA-250 / LMG 18311</strain>
    </source>
</reference>
<comment type="function">
    <text evidence="1">Involved in DNA repair and RecF pathway recombination.</text>
</comment>
<comment type="similarity">
    <text evidence="1">Belongs to the RecO family.</text>
</comment>
<dbReference type="EMBL" id="CP000023">
    <property type="protein sequence ID" value="AAV59757.1"/>
    <property type="molecule type" value="Genomic_DNA"/>
</dbReference>
<dbReference type="RefSeq" id="WP_002946256.1">
    <property type="nucleotide sequence ID" value="NC_006448.1"/>
</dbReference>
<dbReference type="SMR" id="Q5M6K1"/>
<dbReference type="STRING" id="264199.stu0027"/>
<dbReference type="GeneID" id="66897947"/>
<dbReference type="KEGG" id="stl:stu0027"/>
<dbReference type="eggNOG" id="COG1381">
    <property type="taxonomic scope" value="Bacteria"/>
</dbReference>
<dbReference type="HOGENOM" id="CLU_066632_4_0_9"/>
<dbReference type="Proteomes" id="UP000001170">
    <property type="component" value="Chromosome"/>
</dbReference>
<dbReference type="GO" id="GO:0043590">
    <property type="term" value="C:bacterial nucleoid"/>
    <property type="evidence" value="ECO:0007669"/>
    <property type="project" value="TreeGrafter"/>
</dbReference>
<dbReference type="GO" id="GO:0006310">
    <property type="term" value="P:DNA recombination"/>
    <property type="evidence" value="ECO:0007669"/>
    <property type="project" value="UniProtKB-UniRule"/>
</dbReference>
<dbReference type="GO" id="GO:0006302">
    <property type="term" value="P:double-strand break repair"/>
    <property type="evidence" value="ECO:0007669"/>
    <property type="project" value="TreeGrafter"/>
</dbReference>
<dbReference type="Gene3D" id="2.40.50.140">
    <property type="entry name" value="Nucleic acid-binding proteins"/>
    <property type="match status" value="1"/>
</dbReference>
<dbReference type="Gene3D" id="1.20.1440.120">
    <property type="entry name" value="Recombination protein O, C-terminal domain"/>
    <property type="match status" value="1"/>
</dbReference>
<dbReference type="HAMAP" id="MF_00201">
    <property type="entry name" value="RecO"/>
    <property type="match status" value="1"/>
</dbReference>
<dbReference type="InterPro" id="IPR037278">
    <property type="entry name" value="ARFGAP/RecO"/>
</dbReference>
<dbReference type="InterPro" id="IPR022572">
    <property type="entry name" value="DNA_rep/recomb_RecO_N"/>
</dbReference>
<dbReference type="InterPro" id="IPR012340">
    <property type="entry name" value="NA-bd_OB-fold"/>
</dbReference>
<dbReference type="InterPro" id="IPR003717">
    <property type="entry name" value="RecO"/>
</dbReference>
<dbReference type="InterPro" id="IPR042242">
    <property type="entry name" value="RecO_C"/>
</dbReference>
<dbReference type="NCBIfam" id="TIGR00613">
    <property type="entry name" value="reco"/>
    <property type="match status" value="1"/>
</dbReference>
<dbReference type="PANTHER" id="PTHR33991">
    <property type="entry name" value="DNA REPAIR PROTEIN RECO"/>
    <property type="match status" value="1"/>
</dbReference>
<dbReference type="PANTHER" id="PTHR33991:SF1">
    <property type="entry name" value="DNA REPAIR PROTEIN RECO"/>
    <property type="match status" value="1"/>
</dbReference>
<dbReference type="Pfam" id="PF02565">
    <property type="entry name" value="RecO_C"/>
    <property type="match status" value="1"/>
</dbReference>
<dbReference type="Pfam" id="PF11967">
    <property type="entry name" value="RecO_N"/>
    <property type="match status" value="1"/>
</dbReference>
<dbReference type="SUPFAM" id="SSF57863">
    <property type="entry name" value="ArfGap/RecO-like zinc finger"/>
    <property type="match status" value="1"/>
</dbReference>
<dbReference type="SUPFAM" id="SSF50249">
    <property type="entry name" value="Nucleic acid-binding proteins"/>
    <property type="match status" value="1"/>
</dbReference>
<protein>
    <recommendedName>
        <fullName evidence="1">DNA repair protein RecO</fullName>
    </recommendedName>
    <alternativeName>
        <fullName evidence="1">Recombination protein O</fullName>
    </alternativeName>
</protein>
<evidence type="ECO:0000255" key="1">
    <source>
        <dbReference type="HAMAP-Rule" id="MF_00201"/>
    </source>
</evidence>
<accession>Q5M6K1</accession>
<keyword id="KW-0227">DNA damage</keyword>
<keyword id="KW-0233">DNA recombination</keyword>
<keyword id="KW-0234">DNA repair</keyword>
<keyword id="KW-1185">Reference proteome</keyword>
<feature type="chain" id="PRO_0000205016" description="DNA repair protein RecO">
    <location>
        <begin position="1"/>
        <end position="257"/>
    </location>
</feature>
<gene>
    <name evidence="1" type="primary">recO</name>
    <name type="ordered locus">stu0027</name>
</gene>
<name>RECO_STRT2</name>
<sequence>MQKLESRGFILFNRNYRENDKLVKIFTKQAGKRMFFVRGGGSGKLSAVIQPLNIAEFMMTVNDEGLSFIEDYSQAESFKEITSDIFKLSYATYLAALTDAAIADGVVDAQLFAFLEKTLVLMEEGLDYEILTNIFEIQVLDRFGVRLNFHECVFCHRVGLPFDFSYKFSGLLCPNHYEEDERRSHLDPNVPYLLDRFQGLSFEELRSISVKDEMKRKLRQFIDELYDNYVGIHLKSKKFIDNLNSWGHIMSKEDNAD</sequence>
<organism>
    <name type="scientific">Streptococcus thermophilus (strain ATCC BAA-250 / LMG 18311)</name>
    <dbReference type="NCBI Taxonomy" id="264199"/>
    <lineage>
        <taxon>Bacteria</taxon>
        <taxon>Bacillati</taxon>
        <taxon>Bacillota</taxon>
        <taxon>Bacilli</taxon>
        <taxon>Lactobacillales</taxon>
        <taxon>Streptococcaceae</taxon>
        <taxon>Streptococcus</taxon>
    </lineage>
</organism>